<feature type="chain" id="PRO_0000199981" description="Gas vesicle protein A1">
    <location>
        <begin position="1"/>
        <end position="86"/>
    </location>
</feature>
<comment type="function">
    <text evidence="1">Gas vesicles are hollow, gas filled proteinaceous nanostructures found in some microorganisms. During planktonic growth they allow positioning of the organism at a favorable depth for light or nutrient acquisition. GvpA forms the protein shell.</text>
</comment>
<comment type="function">
    <text evidence="2">It is not clear if the 2 type A proteins in this organism are functionally redundant (PubMed:9573198).</text>
</comment>
<comment type="function">
    <text evidence="2">When the full gvp locus (gvpA1-gvpP-gvpQ-gvpA2-gvpR-gvpN-gvpF-gvpG-gvpL-gvpS-gvpK-gvpJ-gvpT-gvpU, called pNL26) is expressed in E.coli gas vesicles are made.</text>
</comment>
<comment type="subunit">
    <text evidence="1">The gas vesicle shell is 2 nm thick and consists of a single layer of this protein. It forms helical ribs nearly perpendicular to the long axis of the vesicle.</text>
</comment>
<comment type="subcellular location">
    <subcellularLocation>
        <location evidence="1 4">Gas vesicle shell</location>
    </subcellularLocation>
</comment>
<comment type="disruption phenotype">
    <text evidence="2">Not essential for gas vesicle formation in E.coli.</text>
</comment>
<comment type="similarity">
    <text evidence="1">Belongs to the gas vesicle GvpA family.</text>
</comment>
<evidence type="ECO:0000255" key="1">
    <source>
        <dbReference type="HAMAP-Rule" id="MF_00576"/>
    </source>
</evidence>
<evidence type="ECO:0000269" key="2">
    <source>
    </source>
</evidence>
<evidence type="ECO:0000303" key="3">
    <source>
    </source>
</evidence>
<evidence type="ECO:0000305" key="4">
    <source>
    </source>
</evidence>
<reference key="1">
    <citation type="journal article" date="1998" name="J. Bacteriol.">
        <title>Gas vesicle genes identified in Bacillus megaterium and functional expression in Escherichia coli.</title>
        <authorList>
            <person name="Li N."/>
            <person name="Cannon M.C."/>
        </authorList>
    </citation>
    <scope>NUCLEOTIDE SEQUENCE [GENOMIC DNA]</scope>
    <scope>FUNCTION</scope>
    <scope>EXPRESSION IN E.COLI</scope>
    <scope>PROBABLE SUBCELLULAR LOCATION</scope>
    <scope>DISRUPTION PHENOTYPE</scope>
    <source>
        <strain>ATCC 35985 / VT1660</strain>
    </source>
</reference>
<keyword id="KW-0304">Gas vesicle</keyword>
<protein>
    <recommendedName>
        <fullName evidence="1">Gas vesicle protein A1</fullName>
        <shortName evidence="1">GvpA1</shortName>
    </recommendedName>
    <alternativeName>
        <fullName evidence="3">Gas vesicle structural protein A</fullName>
        <shortName evidence="3">GvpA</shortName>
    </alternativeName>
</protein>
<proteinExistence type="inferred from homology"/>
<gene>
    <name evidence="1" type="primary">gvpA1</name>
    <name evidence="3" type="synonym">gvpA</name>
</gene>
<accession>O68680</accession>
<organism>
    <name type="scientific">Priestia megaterium</name>
    <name type="common">Bacillus megaterium</name>
    <dbReference type="NCBI Taxonomy" id="1404"/>
    <lineage>
        <taxon>Bacteria</taxon>
        <taxon>Bacillati</taxon>
        <taxon>Bacillota</taxon>
        <taxon>Bacilli</taxon>
        <taxon>Bacillales</taxon>
        <taxon>Bacillaceae</taxon>
        <taxon>Priestia</taxon>
    </lineage>
</organism>
<sequence length="86" mass="9292">MSIQKSTDSSSLAEVIDRILDKGIVIDAFARVSLVGIEILTIEARVVIASVDTWLRYAEAVGLLTDKVEEEGLPGRTEERGAGLSF</sequence>
<name>GVPA1_PRIMG</name>
<dbReference type="EMBL" id="AF053765">
    <property type="protein sequence ID" value="AAC38419.1"/>
    <property type="molecule type" value="Genomic_DNA"/>
</dbReference>
<dbReference type="RefSeq" id="WP_013058000.1">
    <property type="nucleotide sequence ID" value="NZ_WWFB01000004.1"/>
</dbReference>
<dbReference type="SMR" id="O68680"/>
<dbReference type="GeneID" id="93643735"/>
<dbReference type="GO" id="GO:0033172">
    <property type="term" value="C:gas vesicle shell"/>
    <property type="evidence" value="ECO:0007669"/>
    <property type="project" value="UniProtKB-UniRule"/>
</dbReference>
<dbReference type="GO" id="GO:0012506">
    <property type="term" value="C:vesicle membrane"/>
    <property type="evidence" value="ECO:0007669"/>
    <property type="project" value="InterPro"/>
</dbReference>
<dbReference type="GO" id="GO:0005198">
    <property type="term" value="F:structural molecule activity"/>
    <property type="evidence" value="ECO:0007669"/>
    <property type="project" value="InterPro"/>
</dbReference>
<dbReference type="HAMAP" id="MF_00576">
    <property type="entry name" value="Gas_vesicle_A"/>
    <property type="match status" value="1"/>
</dbReference>
<dbReference type="InterPro" id="IPR000638">
    <property type="entry name" value="Gas-vesicle_GvpA-like"/>
</dbReference>
<dbReference type="InterPro" id="IPR047870">
    <property type="entry name" value="Gas_vesicle_GvpA"/>
</dbReference>
<dbReference type="InterPro" id="IPR050530">
    <property type="entry name" value="GvpA"/>
</dbReference>
<dbReference type="InterPro" id="IPR018493">
    <property type="entry name" value="GvpA-like_CS"/>
</dbReference>
<dbReference type="NCBIfam" id="NF006874">
    <property type="entry name" value="PRK09371.1"/>
    <property type="match status" value="1"/>
</dbReference>
<dbReference type="PANTHER" id="PTHR35344:SF4">
    <property type="entry name" value="GAS VESICLE PROTEIN A1"/>
    <property type="match status" value="1"/>
</dbReference>
<dbReference type="PANTHER" id="PTHR35344">
    <property type="entry name" value="GAS VESICLE STRUCTURAL PROTEIN 2-RELATED"/>
    <property type="match status" value="1"/>
</dbReference>
<dbReference type="Pfam" id="PF00741">
    <property type="entry name" value="Gas_vesicle"/>
    <property type="match status" value="1"/>
</dbReference>
<dbReference type="PROSITE" id="PS00234">
    <property type="entry name" value="GAS_VESICLE_A_1"/>
    <property type="match status" value="1"/>
</dbReference>
<dbReference type="PROSITE" id="PS00669">
    <property type="entry name" value="GAS_VESICLE_A_2"/>
    <property type="match status" value="1"/>
</dbReference>